<feature type="chain" id="PRO_0000328375" description="Protein phosphatase inhibitor 2">
    <location>
        <begin position="1"/>
        <end position="261"/>
    </location>
</feature>
<feature type="region of interest" description="Disordered" evidence="2">
    <location>
        <begin position="1"/>
        <end position="261"/>
    </location>
</feature>
<feature type="region of interest" description="Required for binding to pppB">
    <location>
        <begin position="1"/>
        <end position="150"/>
    </location>
</feature>
<feature type="coiled-coil region" evidence="1">
    <location>
        <begin position="150"/>
        <end position="242"/>
    </location>
</feature>
<feature type="compositionally biased region" description="Basic and acidic residues" evidence="2">
    <location>
        <begin position="1"/>
        <end position="16"/>
    </location>
</feature>
<feature type="compositionally biased region" description="Acidic residues" evidence="2">
    <location>
        <begin position="17"/>
        <end position="60"/>
    </location>
</feature>
<feature type="compositionally biased region" description="Polar residues" evidence="2">
    <location>
        <begin position="123"/>
        <end position="134"/>
    </location>
</feature>
<feature type="compositionally biased region" description="Basic and acidic residues" evidence="2">
    <location>
        <begin position="154"/>
        <end position="163"/>
    </location>
</feature>
<feature type="compositionally biased region" description="Basic residues" evidence="2">
    <location>
        <begin position="195"/>
        <end position="206"/>
    </location>
</feature>
<feature type="compositionally biased region" description="Acidic residues" evidence="2">
    <location>
        <begin position="212"/>
        <end position="225"/>
    </location>
</feature>
<feature type="compositionally biased region" description="Basic and acidic residues" evidence="2">
    <location>
        <begin position="226"/>
        <end position="250"/>
    </location>
</feature>
<sequence length="261" mass="31091">MNKDEEFLEEHHYKDDDAIEGEEEQGEEEESDLDDDMYNIDGETNDDDDDDEAEDEESSEDEKQNQKFLYKKKRNLTKSSSNGEFKIIPYSTLKGNTPTKGILKNKSQPPPKKNRIVWDEENLTINDMNKSSTMKIDEPKTPYHYYESEEETDESKKYLENKFLELQNALDKQQEKSEWDSDNDEQQQEKEKEKDKKKKKKNLKIHMRSDSDDNDDNEDEDEDETEEKKENKKKFDNLRKAHYNEFKVVRDLNANLSDDEQ</sequence>
<name>IPP2_DICDI</name>
<reference key="1">
    <citation type="journal article" date="2007" name="Biochimie">
        <title>Identification and domain mapping of Dictyostelium discoideum type-1 protein phosphatase inhibitor-2.</title>
        <authorList>
            <person name="Sousa-Canavez J.M."/>
            <person name="Beton D."/>
            <person name="Gonzalez-Kristeller D.C."/>
            <person name="da Silva A.M."/>
        </authorList>
    </citation>
    <scope>NUCLEOTIDE SEQUENCE [MRNA]</scope>
    <scope>FUNCTION</scope>
    <scope>DEVELOPMENTAL STAGE</scope>
    <scope>INTERACTION WITH PPPB</scope>
    <source>
        <strain>AX4</strain>
    </source>
</reference>
<reference key="2">
    <citation type="journal article" date="2002" name="Nature">
        <title>Sequence and analysis of chromosome 2 of Dictyostelium discoideum.</title>
        <authorList>
            <person name="Gloeckner G."/>
            <person name="Eichinger L."/>
            <person name="Szafranski K."/>
            <person name="Pachebat J.A."/>
            <person name="Bankier A.T."/>
            <person name="Dear P.H."/>
            <person name="Lehmann R."/>
            <person name="Baumgart C."/>
            <person name="Parra G."/>
            <person name="Abril J.F."/>
            <person name="Guigo R."/>
            <person name="Kumpf K."/>
            <person name="Tunggal B."/>
            <person name="Cox E.C."/>
            <person name="Quail M.A."/>
            <person name="Platzer M."/>
            <person name="Rosenthal A."/>
            <person name="Noegel A.A."/>
        </authorList>
    </citation>
    <scope>NUCLEOTIDE SEQUENCE [LARGE SCALE GENOMIC DNA]</scope>
    <source>
        <strain>AX4</strain>
    </source>
</reference>
<reference key="3">
    <citation type="journal article" date="2005" name="Nature">
        <title>The genome of the social amoeba Dictyostelium discoideum.</title>
        <authorList>
            <person name="Eichinger L."/>
            <person name="Pachebat J.A."/>
            <person name="Gloeckner G."/>
            <person name="Rajandream M.A."/>
            <person name="Sucgang R."/>
            <person name="Berriman M."/>
            <person name="Song J."/>
            <person name="Olsen R."/>
            <person name="Szafranski K."/>
            <person name="Xu Q."/>
            <person name="Tunggal B."/>
            <person name="Kummerfeld S."/>
            <person name="Madera M."/>
            <person name="Konfortov B.A."/>
            <person name="Rivero F."/>
            <person name="Bankier A.T."/>
            <person name="Lehmann R."/>
            <person name="Hamlin N."/>
            <person name="Davies R."/>
            <person name="Gaudet P."/>
            <person name="Fey P."/>
            <person name="Pilcher K."/>
            <person name="Chen G."/>
            <person name="Saunders D."/>
            <person name="Sodergren E.J."/>
            <person name="Davis P."/>
            <person name="Kerhornou A."/>
            <person name="Nie X."/>
            <person name="Hall N."/>
            <person name="Anjard C."/>
            <person name="Hemphill L."/>
            <person name="Bason N."/>
            <person name="Farbrother P."/>
            <person name="Desany B."/>
            <person name="Just E."/>
            <person name="Morio T."/>
            <person name="Rost R."/>
            <person name="Churcher C.M."/>
            <person name="Cooper J."/>
            <person name="Haydock S."/>
            <person name="van Driessche N."/>
            <person name="Cronin A."/>
            <person name="Goodhead I."/>
            <person name="Muzny D.M."/>
            <person name="Mourier T."/>
            <person name="Pain A."/>
            <person name="Lu M."/>
            <person name="Harper D."/>
            <person name="Lindsay R."/>
            <person name="Hauser H."/>
            <person name="James K.D."/>
            <person name="Quiles M."/>
            <person name="Madan Babu M."/>
            <person name="Saito T."/>
            <person name="Buchrieser C."/>
            <person name="Wardroper A."/>
            <person name="Felder M."/>
            <person name="Thangavelu M."/>
            <person name="Johnson D."/>
            <person name="Knights A."/>
            <person name="Loulseged H."/>
            <person name="Mungall K.L."/>
            <person name="Oliver K."/>
            <person name="Price C."/>
            <person name="Quail M.A."/>
            <person name="Urushihara H."/>
            <person name="Hernandez J."/>
            <person name="Rabbinowitsch E."/>
            <person name="Steffen D."/>
            <person name="Sanders M."/>
            <person name="Ma J."/>
            <person name="Kohara Y."/>
            <person name="Sharp S."/>
            <person name="Simmonds M.N."/>
            <person name="Spiegler S."/>
            <person name="Tivey A."/>
            <person name="Sugano S."/>
            <person name="White B."/>
            <person name="Walker D."/>
            <person name="Woodward J.R."/>
            <person name="Winckler T."/>
            <person name="Tanaka Y."/>
            <person name="Shaulsky G."/>
            <person name="Schleicher M."/>
            <person name="Weinstock G.M."/>
            <person name="Rosenthal A."/>
            <person name="Cox E.C."/>
            <person name="Chisholm R.L."/>
            <person name="Gibbs R.A."/>
            <person name="Loomis W.F."/>
            <person name="Platzer M."/>
            <person name="Kay R.R."/>
            <person name="Williams J.G."/>
            <person name="Dear P.H."/>
            <person name="Noegel A.A."/>
            <person name="Barrell B.G."/>
            <person name="Kuspa A."/>
        </authorList>
    </citation>
    <scope>NUCLEOTIDE SEQUENCE [LARGE SCALE GENOMIC DNA]</scope>
    <source>
        <strain>AX4</strain>
    </source>
</reference>
<comment type="function">
    <text evidence="3">Inhibitor of protein-phosphatase 1 (PP1).</text>
</comment>
<comment type="subunit">
    <text evidence="3">Interacts with pppB.</text>
</comment>
<comment type="developmental stage">
    <text evidence="3">Expressed at all stage of development with an increase from 8 hours after starvation.</text>
</comment>
<comment type="similarity">
    <text evidence="4">Belongs to the protein phosphatase inhibitor 2 family.</text>
</comment>
<keyword id="KW-0175">Coiled coil</keyword>
<keyword id="KW-0650">Protein phosphatase inhibitor</keyword>
<keyword id="KW-1185">Reference proteome</keyword>
<accession>Q86IZ4</accession>
<accession>Q555W8</accession>
<proteinExistence type="evidence at protein level"/>
<evidence type="ECO:0000255" key="1"/>
<evidence type="ECO:0000256" key="2">
    <source>
        <dbReference type="SAM" id="MobiDB-lite"/>
    </source>
</evidence>
<evidence type="ECO:0000269" key="3">
    <source>
    </source>
</evidence>
<evidence type="ECO:0000305" key="4"/>
<organism>
    <name type="scientific">Dictyostelium discoideum</name>
    <name type="common">Social amoeba</name>
    <dbReference type="NCBI Taxonomy" id="44689"/>
    <lineage>
        <taxon>Eukaryota</taxon>
        <taxon>Amoebozoa</taxon>
        <taxon>Evosea</taxon>
        <taxon>Eumycetozoa</taxon>
        <taxon>Dictyostelia</taxon>
        <taxon>Dictyosteliales</taxon>
        <taxon>Dictyosteliaceae</taxon>
        <taxon>Dictyostelium</taxon>
    </lineage>
</organism>
<gene>
    <name type="primary">dpiA</name>
    <name type="ORF">DDB_G0274315</name>
</gene>
<dbReference type="EMBL" id="DQ344638">
    <property type="protein sequence ID" value="ABC70201.1"/>
    <property type="molecule type" value="mRNA"/>
</dbReference>
<dbReference type="EMBL" id="AAFI02000012">
    <property type="protein sequence ID" value="EAL70050.1"/>
    <property type="molecule type" value="Genomic_DNA"/>
</dbReference>
<dbReference type="RefSeq" id="XP_643942.1">
    <property type="nucleotide sequence ID" value="XM_638850.1"/>
</dbReference>
<dbReference type="STRING" id="44689.Q86IZ4"/>
<dbReference type="PaxDb" id="44689-DDB0233418"/>
<dbReference type="EnsemblProtists" id="EAL70050">
    <property type="protein sequence ID" value="EAL70050"/>
    <property type="gene ID" value="DDB_G0274315"/>
</dbReference>
<dbReference type="GeneID" id="8619370"/>
<dbReference type="KEGG" id="ddi:DDB_G0274315"/>
<dbReference type="dictyBase" id="DDB_G0274315">
    <property type="gene designation" value="dpiA"/>
</dbReference>
<dbReference type="VEuPathDB" id="AmoebaDB:DDB_G0274315"/>
<dbReference type="eggNOG" id="ENOG502QYEH">
    <property type="taxonomic scope" value="Eukaryota"/>
</dbReference>
<dbReference type="HOGENOM" id="CLU_1067228_0_0_1"/>
<dbReference type="InParanoid" id="Q86IZ4"/>
<dbReference type="OMA" id="QQEKSEW"/>
<dbReference type="PRO" id="PR:Q86IZ4"/>
<dbReference type="Proteomes" id="UP000002195">
    <property type="component" value="Chromosome 2"/>
</dbReference>
<dbReference type="GO" id="GO:0019903">
    <property type="term" value="F:protein phosphatase binding"/>
    <property type="evidence" value="ECO:0000353"/>
    <property type="project" value="dictyBase"/>
</dbReference>
<dbReference type="GO" id="GO:0004864">
    <property type="term" value="F:protein phosphatase inhibitor activity"/>
    <property type="evidence" value="ECO:0000314"/>
    <property type="project" value="dictyBase"/>
</dbReference>
<dbReference type="GO" id="GO:0035556">
    <property type="term" value="P:intracellular signal transduction"/>
    <property type="evidence" value="ECO:0000314"/>
    <property type="project" value="dictyBase"/>
</dbReference>
<dbReference type="GO" id="GO:0009966">
    <property type="term" value="P:regulation of signal transduction"/>
    <property type="evidence" value="ECO:0007669"/>
    <property type="project" value="InterPro"/>
</dbReference>
<dbReference type="InterPro" id="IPR007062">
    <property type="entry name" value="PPI-2"/>
</dbReference>
<dbReference type="PANTHER" id="PTHR12398:SF20">
    <property type="entry name" value="PROTEIN PHOSPHATASE 1 REGULATORY INHIBITOR SUBUNIT 2"/>
    <property type="match status" value="1"/>
</dbReference>
<dbReference type="PANTHER" id="PTHR12398">
    <property type="entry name" value="PROTEIN PHOSPHATASE INHIBITOR"/>
    <property type="match status" value="1"/>
</dbReference>
<dbReference type="Pfam" id="PF04979">
    <property type="entry name" value="IPP-2"/>
    <property type="match status" value="1"/>
</dbReference>
<protein>
    <recommendedName>
        <fullName>Protein phosphatase inhibitor 2</fullName>
        <shortName>IPP-2</shortName>
    </recommendedName>
    <alternativeName>
        <fullName>DdI-2</fullName>
    </alternativeName>
</protein>